<comment type="function">
    <text>May be involved in transcriptional regulation.</text>
</comment>
<comment type="subcellular location">
    <subcellularLocation>
        <location evidence="5">Nucleus</location>
    </subcellularLocation>
</comment>
<comment type="tissue specificity">
    <text evidence="3 4">Expressed in lung, liver, pancreas and thymus. Lower expression in heart, placenta, spleen, prostate, ovary, small intestine and colon. No expression seen in brain, skeletal muscle, kidney, testis and peripheral blood leukocyte.</text>
</comment>
<comment type="similarity">
    <text evidence="5">Belongs to the krueppel C2H2-type zinc-finger protein family.</text>
</comment>
<organism>
    <name type="scientific">Homo sapiens</name>
    <name type="common">Human</name>
    <dbReference type="NCBI Taxonomy" id="9606"/>
    <lineage>
        <taxon>Eukaryota</taxon>
        <taxon>Metazoa</taxon>
        <taxon>Chordata</taxon>
        <taxon>Craniata</taxon>
        <taxon>Vertebrata</taxon>
        <taxon>Euteleostomi</taxon>
        <taxon>Mammalia</taxon>
        <taxon>Eutheria</taxon>
        <taxon>Euarchontoglires</taxon>
        <taxon>Primates</taxon>
        <taxon>Haplorrhini</taxon>
        <taxon>Catarrhini</taxon>
        <taxon>Hominidae</taxon>
        <taxon>Homo</taxon>
    </lineage>
</organism>
<keyword id="KW-0238">DNA-binding</keyword>
<keyword id="KW-0479">Metal-binding</keyword>
<keyword id="KW-0539">Nucleus</keyword>
<keyword id="KW-1267">Proteomics identification</keyword>
<keyword id="KW-1185">Reference proteome</keyword>
<keyword id="KW-0677">Repeat</keyword>
<keyword id="KW-0804">Transcription</keyword>
<keyword id="KW-0805">Transcription regulation</keyword>
<keyword id="KW-0862">Zinc</keyword>
<keyword id="KW-0863">Zinc-finger</keyword>
<accession>Q2VY69</accession>
<accession>Q86WM1</accession>
<dbReference type="EMBL" id="AY458845">
    <property type="protein sequence ID" value="AAS13443.1"/>
    <property type="molecule type" value="mRNA"/>
</dbReference>
<dbReference type="EMBL" id="AY166789">
    <property type="protein sequence ID" value="AAO45838.1"/>
    <property type="molecule type" value="mRNA"/>
</dbReference>
<dbReference type="CCDS" id="CCDS46099.1"/>
<dbReference type="RefSeq" id="NP_001032902.1">
    <property type="nucleotide sequence ID" value="NM_001037813.4"/>
</dbReference>
<dbReference type="RefSeq" id="XP_011525209.1">
    <property type="nucleotide sequence ID" value="XM_011526907.4"/>
</dbReference>
<dbReference type="RefSeq" id="XP_011525210.1">
    <property type="nucleotide sequence ID" value="XM_011526908.4"/>
</dbReference>
<dbReference type="RefSeq" id="XP_024307254.1">
    <property type="nucleotide sequence ID" value="XM_024451486.2"/>
</dbReference>
<dbReference type="SMR" id="Q2VY69"/>
<dbReference type="BioGRID" id="131208">
    <property type="interactions" value="17"/>
</dbReference>
<dbReference type="FunCoup" id="Q2VY69">
    <property type="interactions" value="25"/>
</dbReference>
<dbReference type="IntAct" id="Q2VY69">
    <property type="interactions" value="13"/>
</dbReference>
<dbReference type="STRING" id="9606.ENSP00000411032"/>
<dbReference type="iPTMnet" id="Q2VY69"/>
<dbReference type="PhosphoSitePlus" id="Q2VY69"/>
<dbReference type="BioMuta" id="ZNF284"/>
<dbReference type="DMDM" id="121941972"/>
<dbReference type="jPOST" id="Q2VY69"/>
<dbReference type="MassIVE" id="Q2VY69"/>
<dbReference type="PaxDb" id="9606-ENSP00000411032"/>
<dbReference type="PeptideAtlas" id="Q2VY69"/>
<dbReference type="ProteomicsDB" id="61527"/>
<dbReference type="Antibodypedia" id="31158">
    <property type="antibodies" value="75 antibodies from 16 providers"/>
</dbReference>
<dbReference type="DNASU" id="342909"/>
<dbReference type="Ensembl" id="ENST00000421176.4">
    <property type="protein sequence ID" value="ENSP00000411032.2"/>
    <property type="gene ID" value="ENSG00000186026.7"/>
</dbReference>
<dbReference type="GeneID" id="342909"/>
<dbReference type="KEGG" id="hsa:342909"/>
<dbReference type="MANE-Select" id="ENST00000421176.4">
    <property type="protein sequence ID" value="ENSP00000411032.2"/>
    <property type="RefSeq nucleotide sequence ID" value="NM_001037813.4"/>
    <property type="RefSeq protein sequence ID" value="NP_001032902.1"/>
</dbReference>
<dbReference type="UCSC" id="uc002oyg.2">
    <property type="organism name" value="human"/>
</dbReference>
<dbReference type="AGR" id="HGNC:13078"/>
<dbReference type="CTD" id="342909"/>
<dbReference type="GeneCards" id="ZNF284"/>
<dbReference type="HGNC" id="HGNC:13078">
    <property type="gene designation" value="ZNF284"/>
</dbReference>
<dbReference type="HPA" id="ENSG00000186026">
    <property type="expression patterns" value="Low tissue specificity"/>
</dbReference>
<dbReference type="neXtProt" id="NX_Q2VY69"/>
<dbReference type="OpenTargets" id="ENSG00000186026"/>
<dbReference type="PharmGKB" id="PA37654"/>
<dbReference type="VEuPathDB" id="HostDB:ENSG00000186026"/>
<dbReference type="eggNOG" id="KOG1721">
    <property type="taxonomic scope" value="Eukaryota"/>
</dbReference>
<dbReference type="GeneTree" id="ENSGT00940000160225"/>
<dbReference type="HOGENOM" id="CLU_002678_31_5_1"/>
<dbReference type="InParanoid" id="Q2VY69"/>
<dbReference type="OMA" id="ISHTCNE"/>
<dbReference type="OrthoDB" id="9411774at2759"/>
<dbReference type="PAN-GO" id="Q2VY69">
    <property type="GO annotations" value="3 GO annotations based on evolutionary models"/>
</dbReference>
<dbReference type="PhylomeDB" id="Q2VY69"/>
<dbReference type="TreeFam" id="TF341885"/>
<dbReference type="PathwayCommons" id="Q2VY69"/>
<dbReference type="SignaLink" id="Q2VY69"/>
<dbReference type="BioGRID-ORCS" id="342909">
    <property type="hits" value="169 hits in 1171 CRISPR screens"/>
</dbReference>
<dbReference type="ChiTaRS" id="ZNF284">
    <property type="organism name" value="human"/>
</dbReference>
<dbReference type="GenomeRNAi" id="342909"/>
<dbReference type="Pharos" id="Q2VY69">
    <property type="development level" value="Tdark"/>
</dbReference>
<dbReference type="PRO" id="PR:Q2VY69"/>
<dbReference type="Proteomes" id="UP000005640">
    <property type="component" value="Chromosome 19"/>
</dbReference>
<dbReference type="RNAct" id="Q2VY69">
    <property type="molecule type" value="protein"/>
</dbReference>
<dbReference type="Bgee" id="ENSG00000186026">
    <property type="expression patterns" value="Expressed in oviduct epithelium and 158 other cell types or tissues"/>
</dbReference>
<dbReference type="GO" id="GO:0005634">
    <property type="term" value="C:nucleus"/>
    <property type="evidence" value="ECO:0007669"/>
    <property type="project" value="UniProtKB-SubCell"/>
</dbReference>
<dbReference type="GO" id="GO:0000981">
    <property type="term" value="F:DNA-binding transcription factor activity, RNA polymerase II-specific"/>
    <property type="evidence" value="ECO:0000318"/>
    <property type="project" value="GO_Central"/>
</dbReference>
<dbReference type="GO" id="GO:0000978">
    <property type="term" value="F:RNA polymerase II cis-regulatory region sequence-specific DNA binding"/>
    <property type="evidence" value="ECO:0000318"/>
    <property type="project" value="GO_Central"/>
</dbReference>
<dbReference type="GO" id="GO:0008270">
    <property type="term" value="F:zinc ion binding"/>
    <property type="evidence" value="ECO:0007669"/>
    <property type="project" value="UniProtKB-KW"/>
</dbReference>
<dbReference type="GO" id="GO:0006355">
    <property type="term" value="P:regulation of DNA-templated transcription"/>
    <property type="evidence" value="ECO:0000318"/>
    <property type="project" value="GO_Central"/>
</dbReference>
<dbReference type="CDD" id="cd07765">
    <property type="entry name" value="KRAB_A-box"/>
    <property type="match status" value="1"/>
</dbReference>
<dbReference type="FunFam" id="3.30.160.60:FF:000709">
    <property type="entry name" value="GDNF-inducible zinc finger protein 1"/>
    <property type="match status" value="1"/>
</dbReference>
<dbReference type="FunFam" id="3.30.160.60:FF:002775">
    <property type="entry name" value="Uncharacterized protein"/>
    <property type="match status" value="1"/>
</dbReference>
<dbReference type="FunFam" id="3.30.160.60:FF:000622">
    <property type="entry name" value="zinc finger protein 26 isoform X3"/>
    <property type="match status" value="1"/>
</dbReference>
<dbReference type="FunFam" id="3.30.160.60:FF:002180">
    <property type="entry name" value="Zinc finger protein 284"/>
    <property type="match status" value="1"/>
</dbReference>
<dbReference type="FunFam" id="3.30.160.60:FF:000608">
    <property type="entry name" value="zinc finger protein 286A isoform X1"/>
    <property type="match status" value="1"/>
</dbReference>
<dbReference type="FunFam" id="3.30.160.60:FF:002153">
    <property type="entry name" value="Zinc finger protein 30"/>
    <property type="match status" value="1"/>
</dbReference>
<dbReference type="FunFam" id="3.30.160.60:FF:002343">
    <property type="entry name" value="Zinc finger protein 33A"/>
    <property type="match status" value="1"/>
</dbReference>
<dbReference type="FunFam" id="3.30.160.60:FF:002090">
    <property type="entry name" value="Zinc finger protein 473"/>
    <property type="match status" value="1"/>
</dbReference>
<dbReference type="FunFam" id="3.30.160.60:FF:001289">
    <property type="entry name" value="Zinc finger protein 574"/>
    <property type="match status" value="1"/>
</dbReference>
<dbReference type="FunFam" id="3.30.160.60:FF:000094">
    <property type="entry name" value="Zinc finger protein 605"/>
    <property type="match status" value="1"/>
</dbReference>
<dbReference type="FunFam" id="3.30.160.60:FF:000176">
    <property type="entry name" value="zinc finger protein 70"/>
    <property type="match status" value="1"/>
</dbReference>
<dbReference type="Gene3D" id="6.10.140.140">
    <property type="match status" value="1"/>
</dbReference>
<dbReference type="Gene3D" id="3.30.160.60">
    <property type="entry name" value="Classic Zinc Finger"/>
    <property type="match status" value="14"/>
</dbReference>
<dbReference type="InterPro" id="IPR050752">
    <property type="entry name" value="C2H2-ZF_domain"/>
</dbReference>
<dbReference type="InterPro" id="IPR001909">
    <property type="entry name" value="KRAB"/>
</dbReference>
<dbReference type="InterPro" id="IPR036051">
    <property type="entry name" value="KRAB_dom_sf"/>
</dbReference>
<dbReference type="InterPro" id="IPR036236">
    <property type="entry name" value="Znf_C2H2_sf"/>
</dbReference>
<dbReference type="InterPro" id="IPR013087">
    <property type="entry name" value="Znf_C2H2_type"/>
</dbReference>
<dbReference type="PANTHER" id="PTHR24384">
    <property type="entry name" value="FINGER PUTATIVE TRANSCRIPTION FACTOR FAMILY-RELATED"/>
    <property type="match status" value="1"/>
</dbReference>
<dbReference type="PANTHER" id="PTHR24384:SF218">
    <property type="entry name" value="ZINC FINGER PROTEIN 502"/>
    <property type="match status" value="1"/>
</dbReference>
<dbReference type="Pfam" id="PF01352">
    <property type="entry name" value="KRAB"/>
    <property type="match status" value="1"/>
</dbReference>
<dbReference type="Pfam" id="PF00096">
    <property type="entry name" value="zf-C2H2"/>
    <property type="match status" value="6"/>
</dbReference>
<dbReference type="Pfam" id="PF13912">
    <property type="entry name" value="zf-C2H2_6"/>
    <property type="match status" value="1"/>
</dbReference>
<dbReference type="SMART" id="SM00349">
    <property type="entry name" value="KRAB"/>
    <property type="match status" value="1"/>
</dbReference>
<dbReference type="SMART" id="SM00355">
    <property type="entry name" value="ZnF_C2H2"/>
    <property type="match status" value="13"/>
</dbReference>
<dbReference type="SUPFAM" id="SSF57667">
    <property type="entry name" value="beta-beta-alpha zinc fingers"/>
    <property type="match status" value="8"/>
</dbReference>
<dbReference type="SUPFAM" id="SSF109640">
    <property type="entry name" value="KRAB domain (Kruppel-associated box)"/>
    <property type="match status" value="1"/>
</dbReference>
<dbReference type="PROSITE" id="PS50805">
    <property type="entry name" value="KRAB"/>
    <property type="match status" value="1"/>
</dbReference>
<dbReference type="PROSITE" id="PS00028">
    <property type="entry name" value="ZINC_FINGER_C2H2_1"/>
    <property type="match status" value="11"/>
</dbReference>
<dbReference type="PROSITE" id="PS50157">
    <property type="entry name" value="ZINC_FINGER_C2H2_2"/>
    <property type="match status" value="14"/>
</dbReference>
<sequence length="593" mass="69019">MTMFKEAVTFKDVAVVFTEEELGLLDVSQRKLYRDVMLENFRNLLSVGHQLSHRDTFHFQREEKFWIMETATQREGNSGGKIQTELESVPETGPHEEWSCQQIWEQTASELTRPQDSISSSQFSTQGDVPSQVDAGLSIIHIGETPSEHGKCKKFFSDVSILDLHQQLHSGKISHTCNEYRKRFCYSSALCLHQKVHMGEKRYKCDVCSKAFSQNSQLQTHQRIHTGEKPFKCEQCGKSFSRRSGMYVHCKLHTGEKPHICEECGKAFIHNSQLREHQRIHTGEKPFKCYICGKSFHSRSNLNRHSMVHMQEKSFRCDTCSNSFGQRSALNSHCMDHTKEKLYKCEECGRSFTCRQDLCKHQMDHTGDKPYNCNVCGKGFRWSSCLSRHQRVHNGETTFKCDGCGKRFYMNSQGHSHQRAYREEELYKCQKCGKGYISKFNLDLHQRVHTGERPYNCKECGKSFRWASGILRHKRLHTGEKPFKCEECGKRFTENSKLRFHQRIHTGEKPYKCEECGKGFRWASTHLTHQRLHSREKLFQCEDCGKSSEHSSCLQDQQSDHSGEKTSKCEDCGKRYERRLNLDMILSLFLNDI</sequence>
<protein>
    <recommendedName>
        <fullName>Zinc finger protein 284</fullName>
    </recommendedName>
</protein>
<proteinExistence type="evidence at protein level"/>
<feature type="chain" id="PRO_0000280403" description="Zinc finger protein 284">
    <location>
        <begin position="1"/>
        <end position="593"/>
    </location>
</feature>
<feature type="domain" description="KRAB" evidence="2">
    <location>
        <begin position="8"/>
        <end position="78"/>
    </location>
</feature>
<feature type="zinc finger region" description="C2H2-type 1; degenerate" evidence="1">
    <location>
        <begin position="145"/>
        <end position="169"/>
    </location>
</feature>
<feature type="zinc finger region" description="C2H2-type 2; degenerate" evidence="1">
    <location>
        <begin position="175"/>
        <end position="197"/>
    </location>
</feature>
<feature type="zinc finger region" description="C2H2-type 3" evidence="1">
    <location>
        <begin position="203"/>
        <end position="225"/>
    </location>
</feature>
<feature type="zinc finger region" description="C2H2-type 4" evidence="1">
    <location>
        <begin position="231"/>
        <end position="253"/>
    </location>
</feature>
<feature type="zinc finger region" description="C2H2-type 5" evidence="1">
    <location>
        <begin position="259"/>
        <end position="281"/>
    </location>
</feature>
<feature type="zinc finger region" description="C2H2-type 6" evidence="1">
    <location>
        <begin position="287"/>
        <end position="309"/>
    </location>
</feature>
<feature type="zinc finger region" description="C2H2-type 7" evidence="1">
    <location>
        <begin position="315"/>
        <end position="337"/>
    </location>
</feature>
<feature type="zinc finger region" description="C2H2-type 8" evidence="1">
    <location>
        <begin position="343"/>
        <end position="365"/>
    </location>
</feature>
<feature type="zinc finger region" description="C2H2-type 9" evidence="1">
    <location>
        <begin position="371"/>
        <end position="393"/>
    </location>
</feature>
<feature type="zinc finger region" description="C2H2-type 10; degenerate" evidence="1">
    <location>
        <begin position="399"/>
        <end position="421"/>
    </location>
</feature>
<feature type="zinc finger region" description="C2H2-type 11" evidence="1">
    <location>
        <begin position="427"/>
        <end position="449"/>
    </location>
</feature>
<feature type="zinc finger region" description="C2H2-type 12" evidence="1">
    <location>
        <begin position="455"/>
        <end position="477"/>
    </location>
</feature>
<feature type="zinc finger region" description="C2H2-type 13" evidence="1">
    <location>
        <begin position="483"/>
        <end position="505"/>
    </location>
</feature>
<feature type="zinc finger region" description="C2H2-type 14" evidence="1">
    <location>
        <begin position="511"/>
        <end position="533"/>
    </location>
</feature>
<feature type="zinc finger region" description="C2H2-type 15; degenerate" evidence="1">
    <location>
        <begin position="539"/>
        <end position="561"/>
    </location>
</feature>
<feature type="sequence variant" id="VAR_031135" description="In dbSNP:rs8113249.">
    <original>K</original>
    <variation>E</variation>
    <location>
        <position position="546"/>
    </location>
</feature>
<feature type="sequence variant" id="VAR_059909" description="In dbSNP:rs8113249.">
    <original>E</original>
    <variation>K</variation>
    <location>
        <position position="577"/>
    </location>
</feature>
<name>ZN284_HUMAN</name>
<gene>
    <name type="primary">ZNF284</name>
    <name type="synonym">ZNF284L</name>
</gene>
<evidence type="ECO:0000255" key="1">
    <source>
        <dbReference type="PROSITE-ProRule" id="PRU00042"/>
    </source>
</evidence>
<evidence type="ECO:0000255" key="2">
    <source>
        <dbReference type="PROSITE-ProRule" id="PRU00119"/>
    </source>
</evidence>
<evidence type="ECO:0000269" key="3">
    <source>
    </source>
</evidence>
<evidence type="ECO:0000269" key="4">
    <source>
    </source>
</evidence>
<evidence type="ECO:0000305" key="5"/>
<reference key="1">
    <citation type="journal article" date="2006" name="Mol. Biol. Rep.">
        <title>Cloning and characterization of a novel KRAB-domain-containing zinc finger gene (ZNF284L).</title>
        <authorList>
            <person name="Yin G."/>
            <person name="Ji C."/>
            <person name="Zeng L."/>
            <person name="Wang Z."/>
            <person name="Wang J."/>
            <person name="Shen Z."/>
            <person name="Wu T."/>
            <person name="Gu S."/>
            <person name="Xie Y."/>
            <person name="Mao Y."/>
        </authorList>
    </citation>
    <scope>NUCLEOTIDE SEQUENCE [MRNA]</scope>
    <scope>TISSUE SPECIFICITY</scope>
    <source>
        <tissue>Fetal brain</tissue>
    </source>
</reference>
<reference key="2">
    <citation type="journal article" date="2003" name="Genome Res.">
        <title>Differential expansion of zinc-finger transcription factor loci in homologous human and mouse gene clusters.</title>
        <authorList>
            <person name="Shannon M."/>
            <person name="Hamilton A.T."/>
            <person name="Gordon L."/>
            <person name="Branscomb E."/>
            <person name="Stubbs L."/>
        </authorList>
    </citation>
    <scope>NUCLEOTIDE SEQUENCE [MRNA] OF 29-232</scope>
    <scope>TISSUE SPECIFICITY</scope>
    <source>
        <tissue>Testis</tissue>
    </source>
</reference>